<organism>
    <name type="scientific">Shewanella loihica (strain ATCC BAA-1088 / PV-4)</name>
    <dbReference type="NCBI Taxonomy" id="323850"/>
    <lineage>
        <taxon>Bacteria</taxon>
        <taxon>Pseudomonadati</taxon>
        <taxon>Pseudomonadota</taxon>
        <taxon>Gammaproteobacteria</taxon>
        <taxon>Alteromonadales</taxon>
        <taxon>Shewanellaceae</taxon>
        <taxon>Shewanella</taxon>
    </lineage>
</organism>
<feature type="chain" id="PRO_1000024224" description="Dihydroorotate dehydrogenase (quinone)">
    <location>
        <begin position="1"/>
        <end position="341"/>
    </location>
</feature>
<feature type="active site" description="Nucleophile" evidence="1">
    <location>
        <position position="175"/>
    </location>
</feature>
<feature type="binding site" evidence="1">
    <location>
        <begin position="62"/>
        <end position="66"/>
    </location>
    <ligand>
        <name>FMN</name>
        <dbReference type="ChEBI" id="CHEBI:58210"/>
    </ligand>
</feature>
<feature type="binding site" evidence="1">
    <location>
        <position position="66"/>
    </location>
    <ligand>
        <name>substrate</name>
    </ligand>
</feature>
<feature type="binding site" evidence="1">
    <location>
        <position position="86"/>
    </location>
    <ligand>
        <name>FMN</name>
        <dbReference type="ChEBI" id="CHEBI:58210"/>
    </ligand>
</feature>
<feature type="binding site" evidence="1">
    <location>
        <begin position="111"/>
        <end position="115"/>
    </location>
    <ligand>
        <name>substrate</name>
    </ligand>
</feature>
<feature type="binding site" evidence="1">
    <location>
        <position position="139"/>
    </location>
    <ligand>
        <name>FMN</name>
        <dbReference type="ChEBI" id="CHEBI:58210"/>
    </ligand>
</feature>
<feature type="binding site" evidence="1">
    <location>
        <position position="172"/>
    </location>
    <ligand>
        <name>FMN</name>
        <dbReference type="ChEBI" id="CHEBI:58210"/>
    </ligand>
</feature>
<feature type="binding site" evidence="1">
    <location>
        <position position="172"/>
    </location>
    <ligand>
        <name>substrate</name>
    </ligand>
</feature>
<feature type="binding site" evidence="1">
    <location>
        <position position="177"/>
    </location>
    <ligand>
        <name>substrate</name>
    </ligand>
</feature>
<feature type="binding site" evidence="1">
    <location>
        <position position="217"/>
    </location>
    <ligand>
        <name>FMN</name>
        <dbReference type="ChEBI" id="CHEBI:58210"/>
    </ligand>
</feature>
<feature type="binding site" evidence="1">
    <location>
        <position position="245"/>
    </location>
    <ligand>
        <name>FMN</name>
        <dbReference type="ChEBI" id="CHEBI:58210"/>
    </ligand>
</feature>
<feature type="binding site" evidence="1">
    <location>
        <begin position="246"/>
        <end position="247"/>
    </location>
    <ligand>
        <name>substrate</name>
    </ligand>
</feature>
<feature type="binding site" evidence="1">
    <location>
        <position position="268"/>
    </location>
    <ligand>
        <name>FMN</name>
        <dbReference type="ChEBI" id="CHEBI:58210"/>
    </ligand>
</feature>
<feature type="binding site" evidence="1">
    <location>
        <position position="297"/>
    </location>
    <ligand>
        <name>FMN</name>
        <dbReference type="ChEBI" id="CHEBI:58210"/>
    </ligand>
</feature>
<feature type="binding site" evidence="1">
    <location>
        <begin position="318"/>
        <end position="319"/>
    </location>
    <ligand>
        <name>FMN</name>
        <dbReference type="ChEBI" id="CHEBI:58210"/>
    </ligand>
</feature>
<gene>
    <name evidence="1" type="primary">pyrD</name>
    <name type="ordered locus">Shew_1810</name>
</gene>
<keyword id="KW-1003">Cell membrane</keyword>
<keyword id="KW-0285">Flavoprotein</keyword>
<keyword id="KW-0288">FMN</keyword>
<keyword id="KW-0472">Membrane</keyword>
<keyword id="KW-0560">Oxidoreductase</keyword>
<keyword id="KW-0665">Pyrimidine biosynthesis</keyword>
<keyword id="KW-1185">Reference proteome</keyword>
<sequence>MFYKIAQKVMFQMDPEKAHNLAIGSLKSTANSPLNCFYAQKLQAAPVEFMGLTFPNPVGLAAGMDKDGECIDAFHAMGFGHVEVGTVTPRPQPGNDQPRLFRLKPAKAIINRMGFNNKGVDNLVANLKAAKSGAMVGVNIGKNKDTPVEQGKEDYLICMEKVYPYAAYIAVNISSPNTPGLRSLQYGDLLDDLLGSLKAKQKDLAERHGKYVPIALKIAPDLEPDEIEKIAESLIRNEFDGAIATNTTLTRDGVSGLVNSNEAGGLSGKPLNSLSTKVIKQLADCLKGQVPIIGVGGINSAADALDKLDAGATMVQIYSGFIYRGPELIKEIVDAYRVKSK</sequence>
<comment type="function">
    <text evidence="1">Catalyzes the conversion of dihydroorotate to orotate with quinone as electron acceptor.</text>
</comment>
<comment type="catalytic activity">
    <reaction evidence="1">
        <text>(S)-dihydroorotate + a quinone = orotate + a quinol</text>
        <dbReference type="Rhea" id="RHEA:30187"/>
        <dbReference type="ChEBI" id="CHEBI:24646"/>
        <dbReference type="ChEBI" id="CHEBI:30839"/>
        <dbReference type="ChEBI" id="CHEBI:30864"/>
        <dbReference type="ChEBI" id="CHEBI:132124"/>
        <dbReference type="EC" id="1.3.5.2"/>
    </reaction>
</comment>
<comment type="cofactor">
    <cofactor evidence="1">
        <name>FMN</name>
        <dbReference type="ChEBI" id="CHEBI:58210"/>
    </cofactor>
    <text evidence="1">Binds 1 FMN per subunit.</text>
</comment>
<comment type="pathway">
    <text evidence="1">Pyrimidine metabolism; UMP biosynthesis via de novo pathway; orotate from (S)-dihydroorotate (quinone route): step 1/1.</text>
</comment>
<comment type="subunit">
    <text evidence="1">Monomer.</text>
</comment>
<comment type="subcellular location">
    <subcellularLocation>
        <location evidence="1">Cell membrane</location>
        <topology evidence="1">Peripheral membrane protein</topology>
    </subcellularLocation>
</comment>
<comment type="similarity">
    <text evidence="1">Belongs to the dihydroorotate dehydrogenase family. Type 2 subfamily.</text>
</comment>
<proteinExistence type="inferred from homology"/>
<dbReference type="EC" id="1.3.5.2" evidence="1"/>
<dbReference type="EMBL" id="CP000606">
    <property type="protein sequence ID" value="ABO23676.1"/>
    <property type="molecule type" value="Genomic_DNA"/>
</dbReference>
<dbReference type="RefSeq" id="WP_011865608.1">
    <property type="nucleotide sequence ID" value="NC_009092.1"/>
</dbReference>
<dbReference type="SMR" id="A3QDX8"/>
<dbReference type="STRING" id="323850.Shew_1810"/>
<dbReference type="KEGG" id="slo:Shew_1810"/>
<dbReference type="eggNOG" id="COG0167">
    <property type="taxonomic scope" value="Bacteria"/>
</dbReference>
<dbReference type="HOGENOM" id="CLU_013640_2_0_6"/>
<dbReference type="OrthoDB" id="9802377at2"/>
<dbReference type="UniPathway" id="UPA00070">
    <property type="reaction ID" value="UER00946"/>
</dbReference>
<dbReference type="Proteomes" id="UP000001558">
    <property type="component" value="Chromosome"/>
</dbReference>
<dbReference type="GO" id="GO:0005737">
    <property type="term" value="C:cytoplasm"/>
    <property type="evidence" value="ECO:0007669"/>
    <property type="project" value="InterPro"/>
</dbReference>
<dbReference type="GO" id="GO:0005886">
    <property type="term" value="C:plasma membrane"/>
    <property type="evidence" value="ECO:0007669"/>
    <property type="project" value="UniProtKB-SubCell"/>
</dbReference>
<dbReference type="GO" id="GO:0106430">
    <property type="term" value="F:dihydroorotate dehydrogenase (quinone) activity"/>
    <property type="evidence" value="ECO:0007669"/>
    <property type="project" value="UniProtKB-EC"/>
</dbReference>
<dbReference type="GO" id="GO:0006207">
    <property type="term" value="P:'de novo' pyrimidine nucleobase biosynthetic process"/>
    <property type="evidence" value="ECO:0007669"/>
    <property type="project" value="InterPro"/>
</dbReference>
<dbReference type="GO" id="GO:0044205">
    <property type="term" value="P:'de novo' UMP biosynthetic process"/>
    <property type="evidence" value="ECO:0007669"/>
    <property type="project" value="UniProtKB-UniRule"/>
</dbReference>
<dbReference type="CDD" id="cd04738">
    <property type="entry name" value="DHOD_2_like"/>
    <property type="match status" value="1"/>
</dbReference>
<dbReference type="FunFam" id="3.20.20.70:FF:000028">
    <property type="entry name" value="Dihydroorotate dehydrogenase (quinone)"/>
    <property type="match status" value="1"/>
</dbReference>
<dbReference type="Gene3D" id="3.20.20.70">
    <property type="entry name" value="Aldolase class I"/>
    <property type="match status" value="1"/>
</dbReference>
<dbReference type="HAMAP" id="MF_00225">
    <property type="entry name" value="DHO_dh_type2"/>
    <property type="match status" value="1"/>
</dbReference>
<dbReference type="InterPro" id="IPR013785">
    <property type="entry name" value="Aldolase_TIM"/>
</dbReference>
<dbReference type="InterPro" id="IPR050074">
    <property type="entry name" value="DHO_dehydrogenase"/>
</dbReference>
<dbReference type="InterPro" id="IPR012135">
    <property type="entry name" value="Dihydroorotate_DH_1_2"/>
</dbReference>
<dbReference type="InterPro" id="IPR005719">
    <property type="entry name" value="Dihydroorotate_DH_2"/>
</dbReference>
<dbReference type="InterPro" id="IPR005720">
    <property type="entry name" value="Dihydroorotate_DH_cat"/>
</dbReference>
<dbReference type="InterPro" id="IPR001295">
    <property type="entry name" value="Dihydroorotate_DH_CS"/>
</dbReference>
<dbReference type="NCBIfam" id="NF003644">
    <property type="entry name" value="PRK05286.1-1"/>
    <property type="match status" value="1"/>
</dbReference>
<dbReference type="NCBIfam" id="NF003645">
    <property type="entry name" value="PRK05286.1-2"/>
    <property type="match status" value="1"/>
</dbReference>
<dbReference type="NCBIfam" id="NF003646">
    <property type="entry name" value="PRK05286.1-4"/>
    <property type="match status" value="1"/>
</dbReference>
<dbReference type="NCBIfam" id="NF003652">
    <property type="entry name" value="PRK05286.2-5"/>
    <property type="match status" value="1"/>
</dbReference>
<dbReference type="NCBIfam" id="TIGR01036">
    <property type="entry name" value="pyrD_sub2"/>
    <property type="match status" value="1"/>
</dbReference>
<dbReference type="PANTHER" id="PTHR48109:SF4">
    <property type="entry name" value="DIHYDROOROTATE DEHYDROGENASE (QUINONE), MITOCHONDRIAL"/>
    <property type="match status" value="1"/>
</dbReference>
<dbReference type="PANTHER" id="PTHR48109">
    <property type="entry name" value="DIHYDROOROTATE DEHYDROGENASE (QUINONE), MITOCHONDRIAL-RELATED"/>
    <property type="match status" value="1"/>
</dbReference>
<dbReference type="Pfam" id="PF01180">
    <property type="entry name" value="DHO_dh"/>
    <property type="match status" value="1"/>
</dbReference>
<dbReference type="PIRSF" id="PIRSF000164">
    <property type="entry name" value="DHO_oxidase"/>
    <property type="match status" value="1"/>
</dbReference>
<dbReference type="SUPFAM" id="SSF51395">
    <property type="entry name" value="FMN-linked oxidoreductases"/>
    <property type="match status" value="1"/>
</dbReference>
<dbReference type="PROSITE" id="PS00911">
    <property type="entry name" value="DHODEHASE_1"/>
    <property type="match status" value="1"/>
</dbReference>
<dbReference type="PROSITE" id="PS00912">
    <property type="entry name" value="DHODEHASE_2"/>
    <property type="match status" value="1"/>
</dbReference>
<protein>
    <recommendedName>
        <fullName evidence="1">Dihydroorotate dehydrogenase (quinone)</fullName>
        <ecNumber evidence="1">1.3.5.2</ecNumber>
    </recommendedName>
    <alternativeName>
        <fullName evidence="1">DHOdehase</fullName>
        <shortName evidence="1">DHOD</shortName>
        <shortName evidence="1">DHODase</shortName>
    </alternativeName>
    <alternativeName>
        <fullName evidence="1">Dihydroorotate oxidase</fullName>
    </alternativeName>
</protein>
<evidence type="ECO:0000255" key="1">
    <source>
        <dbReference type="HAMAP-Rule" id="MF_00225"/>
    </source>
</evidence>
<accession>A3QDX8</accession>
<reference key="1">
    <citation type="submission" date="2007-03" db="EMBL/GenBank/DDBJ databases">
        <title>Complete sequence of Shewanella loihica PV-4.</title>
        <authorList>
            <consortium name="US DOE Joint Genome Institute"/>
            <person name="Copeland A."/>
            <person name="Lucas S."/>
            <person name="Lapidus A."/>
            <person name="Barry K."/>
            <person name="Detter J.C."/>
            <person name="Glavina del Rio T."/>
            <person name="Hammon N."/>
            <person name="Israni S."/>
            <person name="Dalin E."/>
            <person name="Tice H."/>
            <person name="Pitluck S."/>
            <person name="Chain P."/>
            <person name="Malfatti S."/>
            <person name="Shin M."/>
            <person name="Vergez L."/>
            <person name="Schmutz J."/>
            <person name="Larimer F."/>
            <person name="Land M."/>
            <person name="Hauser L."/>
            <person name="Kyrpides N."/>
            <person name="Mikhailova N."/>
            <person name="Romine M.F."/>
            <person name="Serres G."/>
            <person name="Fredrickson J."/>
            <person name="Tiedje J."/>
            <person name="Richardson P."/>
        </authorList>
    </citation>
    <scope>NUCLEOTIDE SEQUENCE [LARGE SCALE GENOMIC DNA]</scope>
    <source>
        <strain>ATCC BAA-1088 / PV-4</strain>
    </source>
</reference>
<name>PYRD_SHELP</name>